<accession>B2TR28</accession>
<reference key="1">
    <citation type="submission" date="2008-04" db="EMBL/GenBank/DDBJ databases">
        <title>Complete sequence of Clostridium botulinum strain Eklund.</title>
        <authorList>
            <person name="Brinkac L.M."/>
            <person name="Brown J.L."/>
            <person name="Bruce D."/>
            <person name="Detter C."/>
            <person name="Munk C."/>
            <person name="Smith L.A."/>
            <person name="Smith T.J."/>
            <person name="Sutton G."/>
            <person name="Brettin T.S."/>
        </authorList>
    </citation>
    <scope>NUCLEOTIDE SEQUENCE [LARGE SCALE GENOMIC DNA]</scope>
    <source>
        <strain>Eklund 17B / Type B</strain>
    </source>
</reference>
<sequence>MRVLFVASEAHPFIKSGGLGDVAGALPKELARKGVDVRVVIPKYREINNELKNKLRFNKWFNVDVGWRNQYCGILEYEYDGVIYYFVDNEYYFSRGGMYGHYDDAERFAFFDRAVLDMIKQLDWKPNVIHCNDWQTGMIPVLLKLEYMRKDMFYWDIKSVFSIHNIAFQGVFDPVILPELFGYDYEQYTNTNLKFDDGVGFMKGAINYSDMITTVSYSYAEEIKTPEFGERLDWLLREKSYMLRGILNGIDYDEFNPKNDSLINKNYDVNNINDKYENKRNLQSELGLSVNENIPMIAMVTRLTSQKGLDLLVHISERLLQNDIQLVIVGTGDKHYEDHFKWLDYKYGNKVSANIRFDNNLAHKAYAASDMFLMPSLFEPCGLGQLIALRYGSIPIVRETGGLKDTIRAYNEYTGEGNGFSFYNYNADELLHIIEYALKIYYDKNKWSNLVKNAMNSNNSWSKSADEYLNMYKELSYR</sequence>
<name>GLGA_CLOBB</name>
<organism>
    <name type="scientific">Clostridium botulinum (strain Eklund 17B / Type B)</name>
    <dbReference type="NCBI Taxonomy" id="935198"/>
    <lineage>
        <taxon>Bacteria</taxon>
        <taxon>Bacillati</taxon>
        <taxon>Bacillota</taxon>
        <taxon>Clostridia</taxon>
        <taxon>Eubacteriales</taxon>
        <taxon>Clostridiaceae</taxon>
        <taxon>Clostridium</taxon>
    </lineage>
</organism>
<comment type="function">
    <text evidence="1">Synthesizes alpha-1,4-glucan chains using ADP-glucose.</text>
</comment>
<comment type="catalytic activity">
    <reaction evidence="1">
        <text>[(1-&gt;4)-alpha-D-glucosyl](n) + ADP-alpha-D-glucose = [(1-&gt;4)-alpha-D-glucosyl](n+1) + ADP + H(+)</text>
        <dbReference type="Rhea" id="RHEA:18189"/>
        <dbReference type="Rhea" id="RHEA-COMP:9584"/>
        <dbReference type="Rhea" id="RHEA-COMP:9587"/>
        <dbReference type="ChEBI" id="CHEBI:15378"/>
        <dbReference type="ChEBI" id="CHEBI:15444"/>
        <dbReference type="ChEBI" id="CHEBI:57498"/>
        <dbReference type="ChEBI" id="CHEBI:456216"/>
        <dbReference type="EC" id="2.4.1.21"/>
    </reaction>
</comment>
<comment type="pathway">
    <text evidence="1">Glycan biosynthesis; glycogen biosynthesis.</text>
</comment>
<comment type="similarity">
    <text evidence="1">Belongs to the glycosyltransferase 1 family. Bacterial/plant glycogen synthase subfamily.</text>
</comment>
<dbReference type="EC" id="2.4.1.21" evidence="1"/>
<dbReference type="EMBL" id="CP001056">
    <property type="protein sequence ID" value="ACD25089.1"/>
    <property type="molecule type" value="Genomic_DNA"/>
</dbReference>
<dbReference type="SMR" id="B2TR28"/>
<dbReference type="CAZy" id="GT5">
    <property type="family name" value="Glycosyltransferase Family 5"/>
</dbReference>
<dbReference type="KEGG" id="cbk:CLL_A3416"/>
<dbReference type="PATRIC" id="fig|935198.13.peg.3376"/>
<dbReference type="HOGENOM" id="CLU_009583_18_2_9"/>
<dbReference type="UniPathway" id="UPA00164"/>
<dbReference type="Proteomes" id="UP000001195">
    <property type="component" value="Chromosome"/>
</dbReference>
<dbReference type="GO" id="GO:0009011">
    <property type="term" value="F:alpha-1,4-glucan glucosyltransferase (ADP-glucose donor) activity"/>
    <property type="evidence" value="ECO:0007669"/>
    <property type="project" value="UniProtKB-UniRule"/>
</dbReference>
<dbReference type="GO" id="GO:0004373">
    <property type="term" value="F:alpha-1,4-glucan glucosyltransferase (UDP-glucose donor) activity"/>
    <property type="evidence" value="ECO:0007669"/>
    <property type="project" value="InterPro"/>
</dbReference>
<dbReference type="GO" id="GO:0005978">
    <property type="term" value="P:glycogen biosynthetic process"/>
    <property type="evidence" value="ECO:0007669"/>
    <property type="project" value="UniProtKB-UniRule"/>
</dbReference>
<dbReference type="CDD" id="cd03791">
    <property type="entry name" value="GT5_Glycogen_synthase_DULL1-like"/>
    <property type="match status" value="1"/>
</dbReference>
<dbReference type="Gene3D" id="3.40.50.2000">
    <property type="entry name" value="Glycogen Phosphorylase B"/>
    <property type="match status" value="2"/>
</dbReference>
<dbReference type="HAMAP" id="MF_00484">
    <property type="entry name" value="Glycogen_synth"/>
    <property type="match status" value="1"/>
</dbReference>
<dbReference type="InterPro" id="IPR001296">
    <property type="entry name" value="Glyco_trans_1"/>
</dbReference>
<dbReference type="InterPro" id="IPR011835">
    <property type="entry name" value="GS/SS"/>
</dbReference>
<dbReference type="InterPro" id="IPR013534">
    <property type="entry name" value="Starch_synth_cat_dom"/>
</dbReference>
<dbReference type="NCBIfam" id="TIGR02095">
    <property type="entry name" value="glgA"/>
    <property type="match status" value="1"/>
</dbReference>
<dbReference type="NCBIfam" id="NF001898">
    <property type="entry name" value="PRK00654.1-1"/>
    <property type="match status" value="1"/>
</dbReference>
<dbReference type="PANTHER" id="PTHR45825:SF11">
    <property type="entry name" value="ALPHA AMYLASE DOMAIN-CONTAINING PROTEIN"/>
    <property type="match status" value="1"/>
</dbReference>
<dbReference type="PANTHER" id="PTHR45825">
    <property type="entry name" value="GRANULE-BOUND STARCH SYNTHASE 1, CHLOROPLASTIC/AMYLOPLASTIC"/>
    <property type="match status" value="1"/>
</dbReference>
<dbReference type="Pfam" id="PF08323">
    <property type="entry name" value="Glyco_transf_5"/>
    <property type="match status" value="1"/>
</dbReference>
<dbReference type="Pfam" id="PF00534">
    <property type="entry name" value="Glycos_transf_1"/>
    <property type="match status" value="1"/>
</dbReference>
<dbReference type="SUPFAM" id="SSF53756">
    <property type="entry name" value="UDP-Glycosyltransferase/glycogen phosphorylase"/>
    <property type="match status" value="1"/>
</dbReference>
<proteinExistence type="inferred from homology"/>
<feature type="chain" id="PRO_1000126062" description="Glycogen synthase">
    <location>
        <begin position="1"/>
        <end position="478"/>
    </location>
</feature>
<feature type="binding site" evidence="1">
    <location>
        <position position="15"/>
    </location>
    <ligand>
        <name>ADP-alpha-D-glucose</name>
        <dbReference type="ChEBI" id="CHEBI:57498"/>
    </ligand>
</feature>
<protein>
    <recommendedName>
        <fullName evidence="1">Glycogen synthase</fullName>
        <ecNumber evidence="1">2.4.1.21</ecNumber>
    </recommendedName>
    <alternativeName>
        <fullName evidence="1">Starch [bacterial glycogen] synthase</fullName>
    </alternativeName>
</protein>
<evidence type="ECO:0000255" key="1">
    <source>
        <dbReference type="HAMAP-Rule" id="MF_00484"/>
    </source>
</evidence>
<gene>
    <name evidence="1" type="primary">glgA</name>
    <name type="ordered locus">CLL_A3416</name>
</gene>
<keyword id="KW-0320">Glycogen biosynthesis</keyword>
<keyword id="KW-0328">Glycosyltransferase</keyword>
<keyword id="KW-0808">Transferase</keyword>